<evidence type="ECO:0000255" key="1">
    <source>
        <dbReference type="HAMAP-Rule" id="MF_00789"/>
    </source>
</evidence>
<sequence>MKIQSIFAASFCLLSSISAHAAIQLTVPDEVELILVDNQEVKLESSFFSTTSTLDLENGKHQIVFRYNPVFKQGKDNIIVSSDIIVSTFSAEDKEISFKFPTYNSPEKAKAFNRDLNWELIDKNNNSIPFAQSQLIYNGMQVGRNIQFEVAKFNTTEHPAAFKEGMLTVTHKEIKNEQGENTAEQMLHYWYEKADQATKERFLKSITNK</sequence>
<feature type="signal peptide" evidence="1">
    <location>
        <begin position="1"/>
        <end position="21"/>
    </location>
</feature>
<feature type="chain" id="PRO_1000200500" description="UPF0319 protein VFMJ11_1730">
    <location>
        <begin position="22"/>
        <end position="209"/>
    </location>
</feature>
<comment type="similarity">
    <text evidence="1">Belongs to the UPF0319 family.</text>
</comment>
<gene>
    <name type="ordered locus">VFMJ11_1730</name>
</gene>
<keyword id="KW-0732">Signal</keyword>
<reference key="1">
    <citation type="submission" date="2008-08" db="EMBL/GenBank/DDBJ databases">
        <title>Complete sequence of Vibrio fischeri strain MJ11.</title>
        <authorList>
            <person name="Mandel M.J."/>
            <person name="Stabb E.V."/>
            <person name="Ruby E.G."/>
            <person name="Ferriera S."/>
            <person name="Johnson J."/>
            <person name="Kravitz S."/>
            <person name="Beeson K."/>
            <person name="Sutton G."/>
            <person name="Rogers Y.-H."/>
            <person name="Friedman R."/>
            <person name="Frazier M."/>
            <person name="Venter J.C."/>
        </authorList>
    </citation>
    <scope>NUCLEOTIDE SEQUENCE [LARGE SCALE GENOMIC DNA]</scope>
    <source>
        <strain>MJ11</strain>
    </source>
</reference>
<name>Y1730_ALIFM</name>
<protein>
    <recommendedName>
        <fullName evidence="1">UPF0319 protein VFMJ11_1730</fullName>
    </recommendedName>
</protein>
<proteinExistence type="inferred from homology"/>
<accession>B5FF49</accession>
<dbReference type="EMBL" id="CP001139">
    <property type="protein sequence ID" value="ACH66526.1"/>
    <property type="molecule type" value="Genomic_DNA"/>
</dbReference>
<dbReference type="RefSeq" id="WP_012533795.1">
    <property type="nucleotide sequence ID" value="NC_011184.1"/>
</dbReference>
<dbReference type="SMR" id="B5FF49"/>
<dbReference type="KEGG" id="vfm:VFMJ11_1730"/>
<dbReference type="HOGENOM" id="CLU_073782_1_0_6"/>
<dbReference type="Proteomes" id="UP000001857">
    <property type="component" value="Chromosome I"/>
</dbReference>
<dbReference type="HAMAP" id="MF_00789">
    <property type="entry name" value="UPF0319"/>
    <property type="match status" value="1"/>
</dbReference>
<dbReference type="InterPro" id="IPR018635">
    <property type="entry name" value="UPF0319"/>
</dbReference>
<dbReference type="PANTHER" id="PTHR38108">
    <property type="entry name" value="UPF0319 PROTEIN YCCT"/>
    <property type="match status" value="1"/>
</dbReference>
<dbReference type="PANTHER" id="PTHR38108:SF1">
    <property type="entry name" value="UPF0319 PROTEIN YCCT"/>
    <property type="match status" value="1"/>
</dbReference>
<dbReference type="Pfam" id="PF09829">
    <property type="entry name" value="DUF2057"/>
    <property type="match status" value="1"/>
</dbReference>
<organism>
    <name type="scientific">Aliivibrio fischeri (strain MJ11)</name>
    <name type="common">Vibrio fischeri</name>
    <dbReference type="NCBI Taxonomy" id="388396"/>
    <lineage>
        <taxon>Bacteria</taxon>
        <taxon>Pseudomonadati</taxon>
        <taxon>Pseudomonadota</taxon>
        <taxon>Gammaproteobacteria</taxon>
        <taxon>Vibrionales</taxon>
        <taxon>Vibrionaceae</taxon>
        <taxon>Aliivibrio</taxon>
    </lineage>
</organism>